<sequence length="192" mass="19991">MDSGRDSGNDSGSVNMARARVALTEHTRYVHDFPAEGVLFEDLTPVLANAEAFAAVVDAQAEAAEELGAEIIGGLDARGFLLGSAVAYKLGLGVIAIRKKGKLPPPVVTQDYDLEYGSAALELPAEGLDLEGRRVVLIDDVLATGGTLAAARKLIETCGGNVTGYVLAIEVGGLGGRERLGDIPVHVIRDPQ</sequence>
<accession>Q8FPL0</accession>
<reference key="1">
    <citation type="journal article" date="2003" name="Genome Res.">
        <title>Comparative complete genome sequence analysis of the amino acid replacements responsible for the thermostability of Corynebacterium efficiens.</title>
        <authorList>
            <person name="Nishio Y."/>
            <person name="Nakamura Y."/>
            <person name="Kawarabayasi Y."/>
            <person name="Usuda Y."/>
            <person name="Kimura E."/>
            <person name="Sugimoto S."/>
            <person name="Matsui K."/>
            <person name="Yamagishi A."/>
            <person name="Kikuchi H."/>
            <person name="Ikeo K."/>
            <person name="Gojobori T."/>
        </authorList>
    </citation>
    <scope>NUCLEOTIDE SEQUENCE [LARGE SCALE GENOMIC DNA]</scope>
    <source>
        <strain>DSM 44549 / YS-314 / AJ 12310 / JCM 11189 / NBRC 100395</strain>
    </source>
</reference>
<feature type="chain" id="PRO_0000149377" description="Adenine phosphoribosyltransferase">
    <location>
        <begin position="1"/>
        <end position="192"/>
    </location>
</feature>
<gene>
    <name evidence="1" type="primary">apt</name>
    <name type="ordered locus">CE1768</name>
</gene>
<dbReference type="EC" id="2.4.2.7" evidence="1"/>
<dbReference type="EMBL" id="BA000035">
    <property type="protein sequence ID" value="BAC18578.1"/>
    <property type="status" value="ALT_INIT"/>
    <property type="molecule type" value="Genomic_DNA"/>
</dbReference>
<dbReference type="RefSeq" id="WP_006767765.1">
    <property type="nucleotide sequence ID" value="NC_004369.1"/>
</dbReference>
<dbReference type="SMR" id="Q8FPL0"/>
<dbReference type="STRING" id="196164.gene:10742189"/>
<dbReference type="KEGG" id="cef:CE1768"/>
<dbReference type="eggNOG" id="COG0503">
    <property type="taxonomic scope" value="Bacteria"/>
</dbReference>
<dbReference type="HOGENOM" id="CLU_063339_3_3_11"/>
<dbReference type="UniPathway" id="UPA00588">
    <property type="reaction ID" value="UER00646"/>
</dbReference>
<dbReference type="Proteomes" id="UP000001409">
    <property type="component" value="Chromosome"/>
</dbReference>
<dbReference type="GO" id="GO:0005737">
    <property type="term" value="C:cytoplasm"/>
    <property type="evidence" value="ECO:0007669"/>
    <property type="project" value="UniProtKB-SubCell"/>
</dbReference>
<dbReference type="GO" id="GO:0002055">
    <property type="term" value="F:adenine binding"/>
    <property type="evidence" value="ECO:0007669"/>
    <property type="project" value="TreeGrafter"/>
</dbReference>
<dbReference type="GO" id="GO:0003999">
    <property type="term" value="F:adenine phosphoribosyltransferase activity"/>
    <property type="evidence" value="ECO:0007669"/>
    <property type="project" value="UniProtKB-UniRule"/>
</dbReference>
<dbReference type="GO" id="GO:0016208">
    <property type="term" value="F:AMP binding"/>
    <property type="evidence" value="ECO:0007669"/>
    <property type="project" value="TreeGrafter"/>
</dbReference>
<dbReference type="GO" id="GO:0006168">
    <property type="term" value="P:adenine salvage"/>
    <property type="evidence" value="ECO:0007669"/>
    <property type="project" value="InterPro"/>
</dbReference>
<dbReference type="GO" id="GO:0044209">
    <property type="term" value="P:AMP salvage"/>
    <property type="evidence" value="ECO:0007669"/>
    <property type="project" value="UniProtKB-UniRule"/>
</dbReference>
<dbReference type="GO" id="GO:0006166">
    <property type="term" value="P:purine ribonucleoside salvage"/>
    <property type="evidence" value="ECO:0007669"/>
    <property type="project" value="UniProtKB-KW"/>
</dbReference>
<dbReference type="CDD" id="cd06223">
    <property type="entry name" value="PRTases_typeI"/>
    <property type="match status" value="1"/>
</dbReference>
<dbReference type="FunFam" id="3.40.50.2020:FF:000021">
    <property type="entry name" value="Adenine phosphoribosyltransferase"/>
    <property type="match status" value="1"/>
</dbReference>
<dbReference type="Gene3D" id="3.40.50.2020">
    <property type="match status" value="1"/>
</dbReference>
<dbReference type="HAMAP" id="MF_00004">
    <property type="entry name" value="Aden_phosphoribosyltr"/>
    <property type="match status" value="1"/>
</dbReference>
<dbReference type="InterPro" id="IPR005764">
    <property type="entry name" value="Ade_phspho_trans"/>
</dbReference>
<dbReference type="InterPro" id="IPR000836">
    <property type="entry name" value="PRibTrfase_dom"/>
</dbReference>
<dbReference type="InterPro" id="IPR029057">
    <property type="entry name" value="PRTase-like"/>
</dbReference>
<dbReference type="InterPro" id="IPR050054">
    <property type="entry name" value="UPRTase/APRTase"/>
</dbReference>
<dbReference type="NCBIfam" id="NF002634">
    <property type="entry name" value="PRK02304.1-3"/>
    <property type="match status" value="1"/>
</dbReference>
<dbReference type="NCBIfam" id="NF002636">
    <property type="entry name" value="PRK02304.1-5"/>
    <property type="match status" value="1"/>
</dbReference>
<dbReference type="PANTHER" id="PTHR32315">
    <property type="entry name" value="ADENINE PHOSPHORIBOSYLTRANSFERASE"/>
    <property type="match status" value="1"/>
</dbReference>
<dbReference type="PANTHER" id="PTHR32315:SF3">
    <property type="entry name" value="ADENINE PHOSPHORIBOSYLTRANSFERASE"/>
    <property type="match status" value="1"/>
</dbReference>
<dbReference type="Pfam" id="PF00156">
    <property type="entry name" value="Pribosyltran"/>
    <property type="match status" value="1"/>
</dbReference>
<dbReference type="SUPFAM" id="SSF53271">
    <property type="entry name" value="PRTase-like"/>
    <property type="match status" value="1"/>
</dbReference>
<dbReference type="PROSITE" id="PS00103">
    <property type="entry name" value="PUR_PYR_PR_TRANSFER"/>
    <property type="match status" value="1"/>
</dbReference>
<organism>
    <name type="scientific">Corynebacterium efficiens (strain DSM 44549 / YS-314 / AJ 12310 / JCM 11189 / NBRC 100395)</name>
    <dbReference type="NCBI Taxonomy" id="196164"/>
    <lineage>
        <taxon>Bacteria</taxon>
        <taxon>Bacillati</taxon>
        <taxon>Actinomycetota</taxon>
        <taxon>Actinomycetes</taxon>
        <taxon>Mycobacteriales</taxon>
        <taxon>Corynebacteriaceae</taxon>
        <taxon>Corynebacterium</taxon>
    </lineage>
</organism>
<keyword id="KW-0963">Cytoplasm</keyword>
<keyword id="KW-0328">Glycosyltransferase</keyword>
<keyword id="KW-0660">Purine salvage</keyword>
<keyword id="KW-1185">Reference proteome</keyword>
<keyword id="KW-0808">Transferase</keyword>
<proteinExistence type="inferred from homology"/>
<protein>
    <recommendedName>
        <fullName evidence="1">Adenine phosphoribosyltransferase</fullName>
        <shortName evidence="1">APRT</shortName>
        <ecNumber evidence="1">2.4.2.7</ecNumber>
    </recommendedName>
</protein>
<name>APT_COREF</name>
<evidence type="ECO:0000255" key="1">
    <source>
        <dbReference type="HAMAP-Rule" id="MF_00004"/>
    </source>
</evidence>
<evidence type="ECO:0000305" key="2"/>
<comment type="function">
    <text evidence="1">Catalyzes a salvage reaction resulting in the formation of AMP, that is energically less costly than de novo synthesis.</text>
</comment>
<comment type="catalytic activity">
    <reaction evidence="1">
        <text>AMP + diphosphate = 5-phospho-alpha-D-ribose 1-diphosphate + adenine</text>
        <dbReference type="Rhea" id="RHEA:16609"/>
        <dbReference type="ChEBI" id="CHEBI:16708"/>
        <dbReference type="ChEBI" id="CHEBI:33019"/>
        <dbReference type="ChEBI" id="CHEBI:58017"/>
        <dbReference type="ChEBI" id="CHEBI:456215"/>
        <dbReference type="EC" id="2.4.2.7"/>
    </reaction>
</comment>
<comment type="pathway">
    <text evidence="1">Purine metabolism; AMP biosynthesis via salvage pathway; AMP from adenine: step 1/1.</text>
</comment>
<comment type="subunit">
    <text evidence="1">Homodimer.</text>
</comment>
<comment type="subcellular location">
    <subcellularLocation>
        <location evidence="1">Cytoplasm</location>
    </subcellularLocation>
</comment>
<comment type="similarity">
    <text evidence="1">Belongs to the purine/pyrimidine phosphoribosyltransferase family.</text>
</comment>
<comment type="sequence caution" evidence="2">
    <conflict type="erroneous initiation">
        <sequence resource="EMBL-CDS" id="BAC18578"/>
    </conflict>
</comment>